<protein>
    <recommendedName>
        <fullName evidence="1">Methionyl-tRNA formyltransferase</fullName>
        <ecNumber evidence="1">2.1.2.9</ecNumber>
    </recommendedName>
</protein>
<accession>B9LFJ4</accession>
<keyword id="KW-0648">Protein biosynthesis</keyword>
<keyword id="KW-0808">Transferase</keyword>
<feature type="chain" id="PRO_1000190016" description="Methionyl-tRNA formyltransferase">
    <location>
        <begin position="1"/>
        <end position="310"/>
    </location>
</feature>
<feature type="binding site" evidence="1">
    <location>
        <begin position="109"/>
        <end position="112"/>
    </location>
    <ligand>
        <name>(6S)-5,6,7,8-tetrahydrofolate</name>
        <dbReference type="ChEBI" id="CHEBI:57453"/>
    </ligand>
</feature>
<name>FMT_CHLSY</name>
<proteinExistence type="inferred from homology"/>
<evidence type="ECO:0000255" key="1">
    <source>
        <dbReference type="HAMAP-Rule" id="MF_00182"/>
    </source>
</evidence>
<comment type="function">
    <text evidence="1">Attaches a formyl group to the free amino group of methionyl-tRNA(fMet). The formyl group appears to play a dual role in the initiator identity of N-formylmethionyl-tRNA by promoting its recognition by IF2 and preventing the misappropriation of this tRNA by the elongation apparatus.</text>
</comment>
<comment type="catalytic activity">
    <reaction evidence="1">
        <text>L-methionyl-tRNA(fMet) + (6R)-10-formyltetrahydrofolate = N-formyl-L-methionyl-tRNA(fMet) + (6S)-5,6,7,8-tetrahydrofolate + H(+)</text>
        <dbReference type="Rhea" id="RHEA:24380"/>
        <dbReference type="Rhea" id="RHEA-COMP:9952"/>
        <dbReference type="Rhea" id="RHEA-COMP:9953"/>
        <dbReference type="ChEBI" id="CHEBI:15378"/>
        <dbReference type="ChEBI" id="CHEBI:57453"/>
        <dbReference type="ChEBI" id="CHEBI:78530"/>
        <dbReference type="ChEBI" id="CHEBI:78844"/>
        <dbReference type="ChEBI" id="CHEBI:195366"/>
        <dbReference type="EC" id="2.1.2.9"/>
    </reaction>
</comment>
<comment type="similarity">
    <text evidence="1">Belongs to the Fmt family.</text>
</comment>
<dbReference type="EC" id="2.1.2.9" evidence="1"/>
<dbReference type="EMBL" id="CP001364">
    <property type="protein sequence ID" value="ACM51482.1"/>
    <property type="molecule type" value="Genomic_DNA"/>
</dbReference>
<dbReference type="SMR" id="B9LFJ4"/>
<dbReference type="KEGG" id="chl:Chy400_0038"/>
<dbReference type="HOGENOM" id="CLU_033347_1_1_0"/>
<dbReference type="OrthoDB" id="9802815at2"/>
<dbReference type="GO" id="GO:0005829">
    <property type="term" value="C:cytosol"/>
    <property type="evidence" value="ECO:0007669"/>
    <property type="project" value="TreeGrafter"/>
</dbReference>
<dbReference type="GO" id="GO:0004479">
    <property type="term" value="F:methionyl-tRNA formyltransferase activity"/>
    <property type="evidence" value="ECO:0007669"/>
    <property type="project" value="UniProtKB-UniRule"/>
</dbReference>
<dbReference type="CDD" id="cd08646">
    <property type="entry name" value="FMT_core_Met-tRNA-FMT_N"/>
    <property type="match status" value="1"/>
</dbReference>
<dbReference type="CDD" id="cd08704">
    <property type="entry name" value="Met_tRNA_FMT_C"/>
    <property type="match status" value="1"/>
</dbReference>
<dbReference type="Gene3D" id="3.10.25.10">
    <property type="entry name" value="Formyl transferase, C-terminal domain"/>
    <property type="match status" value="1"/>
</dbReference>
<dbReference type="Gene3D" id="3.40.50.170">
    <property type="entry name" value="Formyl transferase, N-terminal domain"/>
    <property type="match status" value="1"/>
</dbReference>
<dbReference type="HAMAP" id="MF_00182">
    <property type="entry name" value="Formyl_trans"/>
    <property type="match status" value="1"/>
</dbReference>
<dbReference type="InterPro" id="IPR005794">
    <property type="entry name" value="Fmt"/>
</dbReference>
<dbReference type="InterPro" id="IPR005793">
    <property type="entry name" value="Formyl_trans_C"/>
</dbReference>
<dbReference type="InterPro" id="IPR037022">
    <property type="entry name" value="Formyl_trans_C_sf"/>
</dbReference>
<dbReference type="InterPro" id="IPR002376">
    <property type="entry name" value="Formyl_transf_N"/>
</dbReference>
<dbReference type="InterPro" id="IPR036477">
    <property type="entry name" value="Formyl_transf_N_sf"/>
</dbReference>
<dbReference type="InterPro" id="IPR011034">
    <property type="entry name" value="Formyl_transferase-like_C_sf"/>
</dbReference>
<dbReference type="InterPro" id="IPR044135">
    <property type="entry name" value="Met-tRNA-FMT_C"/>
</dbReference>
<dbReference type="InterPro" id="IPR041711">
    <property type="entry name" value="Met-tRNA-FMT_N"/>
</dbReference>
<dbReference type="NCBIfam" id="TIGR00460">
    <property type="entry name" value="fmt"/>
    <property type="match status" value="1"/>
</dbReference>
<dbReference type="PANTHER" id="PTHR11138">
    <property type="entry name" value="METHIONYL-TRNA FORMYLTRANSFERASE"/>
    <property type="match status" value="1"/>
</dbReference>
<dbReference type="PANTHER" id="PTHR11138:SF5">
    <property type="entry name" value="METHIONYL-TRNA FORMYLTRANSFERASE, MITOCHONDRIAL"/>
    <property type="match status" value="1"/>
</dbReference>
<dbReference type="Pfam" id="PF02911">
    <property type="entry name" value="Formyl_trans_C"/>
    <property type="match status" value="1"/>
</dbReference>
<dbReference type="Pfam" id="PF00551">
    <property type="entry name" value="Formyl_trans_N"/>
    <property type="match status" value="1"/>
</dbReference>
<dbReference type="SUPFAM" id="SSF50486">
    <property type="entry name" value="FMT C-terminal domain-like"/>
    <property type="match status" value="1"/>
</dbReference>
<dbReference type="SUPFAM" id="SSF53328">
    <property type="entry name" value="Formyltransferase"/>
    <property type="match status" value="1"/>
</dbReference>
<organism>
    <name type="scientific">Chloroflexus aurantiacus (strain ATCC 29364 / DSM 637 / Y-400-fl)</name>
    <dbReference type="NCBI Taxonomy" id="480224"/>
    <lineage>
        <taxon>Bacteria</taxon>
        <taxon>Bacillati</taxon>
        <taxon>Chloroflexota</taxon>
        <taxon>Chloroflexia</taxon>
        <taxon>Chloroflexales</taxon>
        <taxon>Chloroflexineae</taxon>
        <taxon>Chloroflexaceae</taxon>
        <taxon>Chloroflexus</taxon>
    </lineage>
</organism>
<gene>
    <name evidence="1" type="primary">fmt</name>
    <name type="ordered locus">Chy400_0038</name>
</gene>
<sequence length="310" mass="33137">MRILFLGSPSFAVHALEALVAAGHEIVGVVTQPDRPAGRDRRLTPPPVKIAAMAHNLPVLQPETLRDPTVVETLSALQPEVGVVAAYGEILRRAVLSIPPLGYLNIHPSLLPLYRGPTPVAGAILAGETVTGVTIMLLDPSMDSGPILAQAVVDLPPTARAGQLTDELFRIGADLLVQVLPRYARGEIEPRPQDHSRATVTKMLKKEDGRIDWSLPAIVIERMTRAYDPWPGAYTFWRGQPLRIIKAAVASADGTNVPGTVIGRSGSGHPLVQTGSDALELIEVQPASRRPMSGSAWLAGVHADNIRLGE</sequence>
<reference key="1">
    <citation type="submission" date="2009-01" db="EMBL/GenBank/DDBJ databases">
        <title>Complete sequence of Chloroflexus sp. Y-400-fl.</title>
        <authorList>
            <consortium name="US DOE Joint Genome Institute"/>
            <person name="Lucas S."/>
            <person name="Copeland A."/>
            <person name="Lapidus A."/>
            <person name="Glavina del Rio T."/>
            <person name="Dalin E."/>
            <person name="Tice H."/>
            <person name="Bruce D."/>
            <person name="Goodwin L."/>
            <person name="Pitluck S."/>
            <person name="Sims D."/>
            <person name="Kiss H."/>
            <person name="Brettin T."/>
            <person name="Detter J.C."/>
            <person name="Han C."/>
            <person name="Larimer F."/>
            <person name="Land M."/>
            <person name="Hauser L."/>
            <person name="Kyrpides N."/>
            <person name="Ovchinnikova G."/>
            <person name="Bryant D.A."/>
            <person name="Richardson P."/>
        </authorList>
    </citation>
    <scope>NUCLEOTIDE SEQUENCE [LARGE SCALE GENOMIC DNA]</scope>
    <source>
        <strain>ATCC 29364 / DSM 637 / Y-400-fl</strain>
    </source>
</reference>